<protein>
    <recommendedName>
        <fullName evidence="1">Na(+)/H(+) antiporter NhaA 1</fullName>
    </recommendedName>
    <alternativeName>
        <fullName evidence="1">Sodium/proton antiporter NhaA 1</fullName>
    </alternativeName>
</protein>
<dbReference type="EMBL" id="AE016795">
    <property type="protein sequence ID" value="AAO11170.1"/>
    <property type="molecule type" value="Genomic_DNA"/>
</dbReference>
<dbReference type="SMR" id="Q8D8Y2"/>
<dbReference type="KEGG" id="vvu:VV1_2833"/>
<dbReference type="HOGENOM" id="CLU_015803_1_0_6"/>
<dbReference type="Proteomes" id="UP000002275">
    <property type="component" value="Chromosome 1"/>
</dbReference>
<dbReference type="GO" id="GO:0005886">
    <property type="term" value="C:plasma membrane"/>
    <property type="evidence" value="ECO:0007669"/>
    <property type="project" value="UniProtKB-SubCell"/>
</dbReference>
<dbReference type="GO" id="GO:0015385">
    <property type="term" value="F:sodium:proton antiporter activity"/>
    <property type="evidence" value="ECO:0007669"/>
    <property type="project" value="TreeGrafter"/>
</dbReference>
<dbReference type="GO" id="GO:0006885">
    <property type="term" value="P:regulation of pH"/>
    <property type="evidence" value="ECO:0007669"/>
    <property type="project" value="InterPro"/>
</dbReference>
<dbReference type="Gene3D" id="1.20.1530.10">
    <property type="entry name" value="Na+/H+ antiporter like domain"/>
    <property type="match status" value="1"/>
</dbReference>
<dbReference type="HAMAP" id="MF_01844">
    <property type="entry name" value="NhaA"/>
    <property type="match status" value="1"/>
</dbReference>
<dbReference type="InterPro" id="IPR023171">
    <property type="entry name" value="Na/H_antiporter_dom_sf"/>
</dbReference>
<dbReference type="InterPro" id="IPR004670">
    <property type="entry name" value="NhaA"/>
</dbReference>
<dbReference type="NCBIfam" id="TIGR00773">
    <property type="entry name" value="NhaA"/>
    <property type="match status" value="1"/>
</dbReference>
<dbReference type="NCBIfam" id="NF007111">
    <property type="entry name" value="PRK09560.1"/>
    <property type="match status" value="1"/>
</dbReference>
<dbReference type="NCBIfam" id="NF007112">
    <property type="entry name" value="PRK09561.1"/>
    <property type="match status" value="1"/>
</dbReference>
<dbReference type="PANTHER" id="PTHR30341:SF0">
    <property type="entry name" value="NA(+)_H(+) ANTIPORTER NHAA"/>
    <property type="match status" value="1"/>
</dbReference>
<dbReference type="PANTHER" id="PTHR30341">
    <property type="entry name" value="SODIUM ION/PROTON ANTIPORTER NHAA-RELATED"/>
    <property type="match status" value="1"/>
</dbReference>
<dbReference type="Pfam" id="PF06965">
    <property type="entry name" value="Na_H_antiport_1"/>
    <property type="match status" value="1"/>
</dbReference>
<feature type="chain" id="PRO_0000334461" description="Na(+)/H(+) antiporter NhaA 1">
    <location>
        <begin position="1"/>
        <end position="389"/>
    </location>
</feature>
<feature type="transmembrane region" description="Helical" evidence="1">
    <location>
        <begin position="14"/>
        <end position="34"/>
    </location>
</feature>
<feature type="transmembrane region" description="Helical" evidence="1">
    <location>
        <begin position="47"/>
        <end position="67"/>
    </location>
</feature>
<feature type="transmembrane region" description="Helical" evidence="1">
    <location>
        <begin position="87"/>
        <end position="107"/>
    </location>
</feature>
<feature type="transmembrane region" description="Helical" evidence="1">
    <location>
        <begin position="117"/>
        <end position="137"/>
    </location>
</feature>
<feature type="transmembrane region" description="Helical" evidence="1">
    <location>
        <begin position="146"/>
        <end position="166"/>
    </location>
</feature>
<feature type="transmembrane region" description="Helical" evidence="1">
    <location>
        <begin position="171"/>
        <end position="191"/>
    </location>
</feature>
<feature type="transmembrane region" description="Helical" evidence="1">
    <location>
        <begin position="197"/>
        <end position="217"/>
    </location>
</feature>
<feature type="transmembrane region" description="Helical" evidence="1">
    <location>
        <begin position="252"/>
        <end position="272"/>
    </location>
</feature>
<feature type="transmembrane region" description="Helical" evidence="1">
    <location>
        <begin position="280"/>
        <end position="300"/>
    </location>
</feature>
<feature type="transmembrane region" description="Helical" evidence="1">
    <location>
        <begin position="321"/>
        <end position="341"/>
    </location>
</feature>
<feature type="transmembrane region" description="Helical" evidence="1">
    <location>
        <begin position="356"/>
        <end position="376"/>
    </location>
</feature>
<name>NHAA1_VIBVU</name>
<proteinExistence type="inferred from homology"/>
<sequence length="389" mass="41073">MNDVIRDFFKMESAGGILLVIAAAIAMVIANSPLNESYQAVLHTYVFGMSVSHWINDGLMAIFFLLIGLEVKRELLEGALKSRETAIFPAIAAVGGMLAPALIYVAFNGNDPEAIKGWAIPAATDIAFALGIMALLGKRVPVSLKVFLLALAIIDDLGVVVIIALFYSGDLSTLALTVGFAMTGVLFMLNAKNVTKLIWYIVVGFILWVAVLKSGVHATLAGVVIGFSIPLQGKKGEHSPLKHMEHALHPYVAFAILPVFAFANAGISLEGVSLSGLTSMLPLGIALGLLVGKPLGIFTFSWAAVKFGVAKLPEGVNFKHIFAVSVLCGIGFTMSIFISSLAFGGANPDFDTYSRLGILMGSTTAAVLGYFLLHVSLPKTAAESEKAIS</sequence>
<evidence type="ECO:0000255" key="1">
    <source>
        <dbReference type="HAMAP-Rule" id="MF_01844"/>
    </source>
</evidence>
<reference key="1">
    <citation type="submission" date="2002-12" db="EMBL/GenBank/DDBJ databases">
        <title>Complete genome sequence of Vibrio vulnificus CMCP6.</title>
        <authorList>
            <person name="Rhee J.H."/>
            <person name="Kim S.Y."/>
            <person name="Chung S.S."/>
            <person name="Kim J.J."/>
            <person name="Moon Y.H."/>
            <person name="Jeong H."/>
            <person name="Choy H.E."/>
        </authorList>
    </citation>
    <scope>NUCLEOTIDE SEQUENCE [LARGE SCALE GENOMIC DNA]</scope>
    <source>
        <strain>CMCP6</strain>
    </source>
</reference>
<keyword id="KW-0050">Antiport</keyword>
<keyword id="KW-0997">Cell inner membrane</keyword>
<keyword id="KW-1003">Cell membrane</keyword>
<keyword id="KW-0406">Ion transport</keyword>
<keyword id="KW-0472">Membrane</keyword>
<keyword id="KW-0915">Sodium</keyword>
<keyword id="KW-0739">Sodium transport</keyword>
<keyword id="KW-0812">Transmembrane</keyword>
<keyword id="KW-1133">Transmembrane helix</keyword>
<keyword id="KW-0813">Transport</keyword>
<accession>Q8D8Y2</accession>
<comment type="function">
    <text evidence="1">Na(+)/H(+) antiporter that extrudes sodium in exchange for external protons.</text>
</comment>
<comment type="catalytic activity">
    <reaction evidence="1">
        <text>Na(+)(in) + 2 H(+)(out) = Na(+)(out) + 2 H(+)(in)</text>
        <dbReference type="Rhea" id="RHEA:29251"/>
        <dbReference type="ChEBI" id="CHEBI:15378"/>
        <dbReference type="ChEBI" id="CHEBI:29101"/>
    </reaction>
    <physiologicalReaction direction="left-to-right" evidence="1">
        <dbReference type="Rhea" id="RHEA:29252"/>
    </physiologicalReaction>
</comment>
<comment type="subcellular location">
    <subcellularLocation>
        <location evidence="1">Cell inner membrane</location>
        <topology evidence="1">Multi-pass membrane protein</topology>
    </subcellularLocation>
</comment>
<comment type="similarity">
    <text evidence="1">Belongs to the NhaA Na(+)/H(+) (TC 2.A.33) antiporter family.</text>
</comment>
<organism>
    <name type="scientific">Vibrio vulnificus (strain CMCP6)</name>
    <dbReference type="NCBI Taxonomy" id="216895"/>
    <lineage>
        <taxon>Bacteria</taxon>
        <taxon>Pseudomonadati</taxon>
        <taxon>Pseudomonadota</taxon>
        <taxon>Gammaproteobacteria</taxon>
        <taxon>Vibrionales</taxon>
        <taxon>Vibrionaceae</taxon>
        <taxon>Vibrio</taxon>
    </lineage>
</organism>
<gene>
    <name evidence="1" type="primary">nhaA1</name>
    <name type="ordered locus">VV1_2833</name>
</gene>